<keyword id="KW-0002">3D-structure</keyword>
<keyword id="KW-0501">Molybdenum cofactor biosynthesis</keyword>
<keyword id="KW-0808">Transferase</keyword>
<dbReference type="EC" id="2.8.1.12"/>
<dbReference type="EMBL" id="BA000018">
    <property type="protein sequence ID" value="BAB43363.1"/>
    <property type="molecule type" value="Genomic_DNA"/>
</dbReference>
<dbReference type="PIR" id="B90025">
    <property type="entry name" value="B90025"/>
</dbReference>
<dbReference type="RefSeq" id="WP_000808495.1">
    <property type="nucleotide sequence ID" value="NC_002745.2"/>
</dbReference>
<dbReference type="PDB" id="2Q5W">
    <property type="method" value="X-ray"/>
    <property type="resolution" value="2.00 A"/>
    <property type="chains" value="E=1-148"/>
</dbReference>
<dbReference type="PDB" id="2QIE">
    <property type="method" value="X-ray"/>
    <property type="resolution" value="2.50 A"/>
    <property type="chains" value="A/E/H/K=1-148"/>
</dbReference>
<dbReference type="PDBsum" id="2Q5W"/>
<dbReference type="PDBsum" id="2QIE"/>
<dbReference type="SMR" id="P65401"/>
<dbReference type="EnsemblBacteria" id="BAB43363">
    <property type="protein sequence ID" value="BAB43363"/>
    <property type="gene ID" value="BAB43363"/>
</dbReference>
<dbReference type="KEGG" id="sau:SA2066"/>
<dbReference type="HOGENOM" id="CLU_089568_1_2_9"/>
<dbReference type="UniPathway" id="UPA00344"/>
<dbReference type="EvolutionaryTrace" id="P65401"/>
<dbReference type="GO" id="GO:0030366">
    <property type="term" value="F:molybdopterin synthase activity"/>
    <property type="evidence" value="ECO:0007669"/>
    <property type="project" value="UniProtKB-EC"/>
</dbReference>
<dbReference type="GO" id="GO:0006777">
    <property type="term" value="P:Mo-molybdopterin cofactor biosynthetic process"/>
    <property type="evidence" value="ECO:0007669"/>
    <property type="project" value="UniProtKB-KW"/>
</dbReference>
<dbReference type="CDD" id="cd00756">
    <property type="entry name" value="MoaE"/>
    <property type="match status" value="1"/>
</dbReference>
<dbReference type="FunFam" id="3.90.1170.40:FF:000003">
    <property type="entry name" value="Molybdopterin converting factor subunit 2"/>
    <property type="match status" value="1"/>
</dbReference>
<dbReference type="Gene3D" id="3.90.1170.40">
    <property type="entry name" value="Molybdopterin biosynthesis MoaE subunit"/>
    <property type="match status" value="1"/>
</dbReference>
<dbReference type="InterPro" id="IPR036563">
    <property type="entry name" value="MoaE_sf"/>
</dbReference>
<dbReference type="InterPro" id="IPR003448">
    <property type="entry name" value="Mopterin_biosynth_MoaE"/>
</dbReference>
<dbReference type="PANTHER" id="PTHR23404">
    <property type="entry name" value="MOLYBDOPTERIN SYNTHASE RELATED"/>
    <property type="match status" value="1"/>
</dbReference>
<dbReference type="Pfam" id="PF02391">
    <property type="entry name" value="MoaE"/>
    <property type="match status" value="1"/>
</dbReference>
<dbReference type="SUPFAM" id="SSF54690">
    <property type="entry name" value="Molybdopterin synthase subunit MoaE"/>
    <property type="match status" value="1"/>
</dbReference>
<name>MOAE_STAAN</name>
<accession>P65401</accession>
<accession>Q99S01</accession>
<comment type="function">
    <text>Converts molybdopterin precursor Z to molybdopterin. This requires the incorporation of two sulfur atoms into precursor Z to generate a dithiolene group. The sulfur is provided by MoaD.</text>
</comment>
<comment type="catalytic activity">
    <reaction evidence="2">
        <text>2 [molybdopterin-synthase sulfur-carrier protein]-C-terminal-Gly-aminoethanethioate + cyclic pyranopterin phosphate + H2O = molybdopterin + 2 [molybdopterin-synthase sulfur-carrier protein]-C-terminal Gly-Gly + 2 H(+)</text>
        <dbReference type="Rhea" id="RHEA:26333"/>
        <dbReference type="Rhea" id="RHEA-COMP:12202"/>
        <dbReference type="Rhea" id="RHEA-COMP:19907"/>
        <dbReference type="ChEBI" id="CHEBI:15377"/>
        <dbReference type="ChEBI" id="CHEBI:15378"/>
        <dbReference type="ChEBI" id="CHEBI:58698"/>
        <dbReference type="ChEBI" id="CHEBI:59648"/>
        <dbReference type="ChEBI" id="CHEBI:90778"/>
        <dbReference type="ChEBI" id="CHEBI:232372"/>
        <dbReference type="EC" id="2.8.1.12"/>
    </reaction>
</comment>
<comment type="pathway">
    <text>Cofactor biosynthesis; molybdopterin biosynthesis.</text>
</comment>
<comment type="subunit">
    <text evidence="1">Heterotetramer of 2 MoaD subunits and 2 MoaE subunits. Also stable as homodimer. The enzyme changes between these two forms during catalysis (By similarity).</text>
</comment>
<comment type="similarity">
    <text evidence="3">Belongs to the MoaE family.</text>
</comment>
<sequence>MKQFEIVIEPIQTEQYREFTINEYQGAVVVFTGHVREWTKGVKTEYLEYEAYIPMAEKKLAQIGDEINEKWPGTITSIVHRIGPLQISDIAVLIAVSSPHRKDAYRANEYAIERIKEIVPIWKKEIWEDGSKWQGHQKGNYEEAKREE</sequence>
<evidence type="ECO:0000250" key="1"/>
<evidence type="ECO:0000269" key="2">
    <source>
    </source>
</evidence>
<evidence type="ECO:0000305" key="3"/>
<evidence type="ECO:0007829" key="4">
    <source>
        <dbReference type="PDB" id="2Q5W"/>
    </source>
</evidence>
<protein>
    <recommendedName>
        <fullName>Molybdopterin synthase catalytic subunit</fullName>
        <ecNumber>2.8.1.12</ecNumber>
    </recommendedName>
    <alternativeName>
        <fullName>MPT synthase subunit 2</fullName>
    </alternativeName>
    <alternativeName>
        <fullName>Molybdenum cofactor biosynthesis protein E</fullName>
    </alternativeName>
    <alternativeName>
        <fullName>Molybdopterin-converting factor large subunit</fullName>
    </alternativeName>
    <alternativeName>
        <fullName>Molybdopterin-converting factor subunit 2</fullName>
    </alternativeName>
</protein>
<reference key="1">
    <citation type="journal article" date="2001" name="Lancet">
        <title>Whole genome sequencing of meticillin-resistant Staphylococcus aureus.</title>
        <authorList>
            <person name="Kuroda M."/>
            <person name="Ohta T."/>
            <person name="Uchiyama I."/>
            <person name="Baba T."/>
            <person name="Yuzawa H."/>
            <person name="Kobayashi I."/>
            <person name="Cui L."/>
            <person name="Oguchi A."/>
            <person name="Aoki K."/>
            <person name="Nagai Y."/>
            <person name="Lian J.-Q."/>
            <person name="Ito T."/>
            <person name="Kanamori M."/>
            <person name="Matsumaru H."/>
            <person name="Maruyama A."/>
            <person name="Murakami H."/>
            <person name="Hosoyama A."/>
            <person name="Mizutani-Ui Y."/>
            <person name="Takahashi N.K."/>
            <person name="Sawano T."/>
            <person name="Inoue R."/>
            <person name="Kaito C."/>
            <person name="Sekimizu K."/>
            <person name="Hirakawa H."/>
            <person name="Kuhara S."/>
            <person name="Goto S."/>
            <person name="Yabuzaki J."/>
            <person name="Kanehisa M."/>
            <person name="Yamashita A."/>
            <person name="Oshima K."/>
            <person name="Furuya K."/>
            <person name="Yoshino C."/>
            <person name="Shiba T."/>
            <person name="Hattori M."/>
            <person name="Ogasawara N."/>
            <person name="Hayashi H."/>
            <person name="Hiramatsu K."/>
        </authorList>
    </citation>
    <scope>NUCLEOTIDE SEQUENCE [LARGE SCALE GENOMIC DNA]</scope>
    <source>
        <strain>N315</strain>
    </source>
</reference>
<reference key="2">
    <citation type="journal article" date="2008" name="Biochemistry">
        <title>Crystal structure of a molybdopterin synthase-precursor Z complex: insight into its sulfur transfer mechanism and its role in molybdenum cofactor deficiency.</title>
        <authorList>
            <person name="Daniels J.N."/>
            <person name="Wuebbens M.M."/>
            <person name="Rajagopalan K.V."/>
            <person name="Schindelin H."/>
        </authorList>
    </citation>
    <scope>X-RAY CRYSTALLOGRAPHY (2.0 ANGSTROMS) IN COMPLEX WITH MOAD WITH OR WITHOUT PRECURSOR Z</scope>
    <scope>CATALYTIC ACTIVITY</scope>
    <scope>REACTION MECHANISM</scope>
</reference>
<reference key="3">
    <citation type="journal article" date="2008" name="Biochemistry">
        <authorList>
            <person name="Daniels J.N."/>
            <person name="Wuebbens M.M."/>
            <person name="Rajagopalan K.V."/>
            <person name="Schindelin H."/>
        </authorList>
    </citation>
    <scope>ERRATUM OF PUBMED:18092812</scope>
</reference>
<gene>
    <name type="primary">moaE</name>
    <name type="ordered locus">SA2066</name>
</gene>
<proteinExistence type="evidence at protein level"/>
<organism>
    <name type="scientific">Staphylococcus aureus (strain N315)</name>
    <dbReference type="NCBI Taxonomy" id="158879"/>
    <lineage>
        <taxon>Bacteria</taxon>
        <taxon>Bacillati</taxon>
        <taxon>Bacillota</taxon>
        <taxon>Bacilli</taxon>
        <taxon>Bacillales</taxon>
        <taxon>Staphylococcaceae</taxon>
        <taxon>Staphylococcus</taxon>
    </lineage>
</organism>
<feature type="chain" id="PRO_0000163099" description="Molybdopterin synthase catalytic subunit">
    <location>
        <begin position="1"/>
        <end position="148"/>
    </location>
</feature>
<feature type="binding site">
    <location>
        <begin position="34"/>
        <end position="36"/>
    </location>
    <ligand>
        <name>substrate</name>
    </ligand>
</feature>
<feature type="binding site">
    <location>
        <position position="44"/>
    </location>
    <ligand>
        <name>substrate</name>
    </ligand>
</feature>
<feature type="binding site">
    <location>
        <begin position="100"/>
        <end position="101"/>
    </location>
    <ligand>
        <name>substrate</name>
    </ligand>
</feature>
<feature type="binding site">
    <location>
        <position position="116"/>
    </location>
    <ligand>
        <name>substrate</name>
    </ligand>
</feature>
<feature type="binding site">
    <location>
        <begin position="123"/>
        <end position="125"/>
    </location>
    <ligand>
        <name>substrate</name>
    </ligand>
</feature>
<feature type="strand" evidence="4">
    <location>
        <begin position="3"/>
        <end position="9"/>
    </location>
</feature>
<feature type="helix" evidence="4">
    <location>
        <begin position="14"/>
        <end position="20"/>
    </location>
</feature>
<feature type="strand" evidence="4">
    <location>
        <begin position="27"/>
        <end position="34"/>
    </location>
</feature>
<feature type="strand" evidence="4">
    <location>
        <begin position="39"/>
        <end position="42"/>
    </location>
</feature>
<feature type="strand" evidence="4">
    <location>
        <begin position="44"/>
        <end position="51"/>
    </location>
</feature>
<feature type="helix" evidence="4">
    <location>
        <begin position="53"/>
        <end position="70"/>
    </location>
</feature>
<feature type="strand" evidence="4">
    <location>
        <begin position="75"/>
        <end position="81"/>
    </location>
</feature>
<feature type="strand" evidence="4">
    <location>
        <begin position="83"/>
        <end position="85"/>
    </location>
</feature>
<feature type="strand" evidence="4">
    <location>
        <begin position="90"/>
        <end position="100"/>
    </location>
</feature>
<feature type="helix" evidence="4">
    <location>
        <begin position="101"/>
        <end position="118"/>
    </location>
</feature>
<feature type="strand" evidence="4">
    <location>
        <begin position="121"/>
        <end position="127"/>
    </location>
</feature>
<feature type="strand" evidence="4">
    <location>
        <begin position="130"/>
        <end position="133"/>
    </location>
</feature>